<feature type="chain" id="PRO_0000144856" description="Putative HTH-type transcriptional regulatory protein MJ1164">
    <location>
        <begin position="1"/>
        <end position="318"/>
    </location>
</feature>
<feature type="domain" description="HTH cro/C1-type" evidence="1">
    <location>
        <begin position="131"/>
        <end position="189"/>
    </location>
</feature>
<feature type="DNA-binding region" description="H-T-H motif" evidence="1">
    <location>
        <begin position="142"/>
        <end position="161"/>
    </location>
</feature>
<name>Y1164_METJA</name>
<protein>
    <recommendedName>
        <fullName evidence="1">Putative HTH-type transcriptional regulatory protein MJ1164</fullName>
    </recommendedName>
</protein>
<sequence>MMIMREILISECIELLRSHKFIVSKPLGRSCFDMVASKEDIRLILKILKNIDSLSRDQSKELKKISKILHGTPLIIGIRTRNAPMEHGVVYDRYNIKAVTFETFRDYLEGSPPMVYANRGGFFVKIDGKVLKEVREAMGISVGKLAEVAGVSRKAIYKYETQMANPSVDVALKIEEFLDVPLVKGIDLFEPVDDEDVENKLENLEDFKKEAINFLNELGFKSFVVEKAPFDAVAEKDMDNNLNILLTNIEEKDNEEVKRKALFVRELSRLLDGYSLLILEEKEKEYKNLPVVSIEELKKMDDALELIEHIKSMLRDIR</sequence>
<accession>Q58564</accession>
<keyword id="KW-0238">DNA-binding</keyword>
<keyword id="KW-1185">Reference proteome</keyword>
<keyword id="KW-0804">Transcription</keyword>
<keyword id="KW-0805">Transcription regulation</keyword>
<reference key="1">
    <citation type="journal article" date="1996" name="Science">
        <title>Complete genome sequence of the methanogenic archaeon, Methanococcus jannaschii.</title>
        <authorList>
            <person name="Bult C.J."/>
            <person name="White O."/>
            <person name="Olsen G.J."/>
            <person name="Zhou L."/>
            <person name="Fleischmann R.D."/>
            <person name="Sutton G.G."/>
            <person name="Blake J.A."/>
            <person name="FitzGerald L.M."/>
            <person name="Clayton R.A."/>
            <person name="Gocayne J.D."/>
            <person name="Kerlavage A.R."/>
            <person name="Dougherty B.A."/>
            <person name="Tomb J.-F."/>
            <person name="Adams M.D."/>
            <person name="Reich C.I."/>
            <person name="Overbeek R."/>
            <person name="Kirkness E.F."/>
            <person name="Weinstock K.G."/>
            <person name="Merrick J.M."/>
            <person name="Glodek A."/>
            <person name="Scott J.L."/>
            <person name="Geoghagen N.S.M."/>
            <person name="Weidman J.F."/>
            <person name="Fuhrmann J.L."/>
            <person name="Nguyen D."/>
            <person name="Utterback T.R."/>
            <person name="Kelley J.M."/>
            <person name="Peterson J.D."/>
            <person name="Sadow P.W."/>
            <person name="Hanna M.C."/>
            <person name="Cotton M.D."/>
            <person name="Roberts K.M."/>
            <person name="Hurst M.A."/>
            <person name="Kaine B.P."/>
            <person name="Borodovsky M."/>
            <person name="Klenk H.-P."/>
            <person name="Fraser C.M."/>
            <person name="Smith H.O."/>
            <person name="Woese C.R."/>
            <person name="Venter J.C."/>
        </authorList>
    </citation>
    <scope>NUCLEOTIDE SEQUENCE [LARGE SCALE GENOMIC DNA]</scope>
    <source>
        <strain>ATCC 43067 / DSM 2661 / JAL-1 / JCM 10045 / NBRC 100440</strain>
    </source>
</reference>
<evidence type="ECO:0000255" key="1">
    <source>
        <dbReference type="HAMAP-Rule" id="MF_00584"/>
    </source>
</evidence>
<gene>
    <name type="ordered locus">MJ1164</name>
</gene>
<organism>
    <name type="scientific">Methanocaldococcus jannaschii (strain ATCC 43067 / DSM 2661 / JAL-1 / JCM 10045 / NBRC 100440)</name>
    <name type="common">Methanococcus jannaschii</name>
    <dbReference type="NCBI Taxonomy" id="243232"/>
    <lineage>
        <taxon>Archaea</taxon>
        <taxon>Methanobacteriati</taxon>
        <taxon>Methanobacteriota</taxon>
        <taxon>Methanomada group</taxon>
        <taxon>Methanococci</taxon>
        <taxon>Methanococcales</taxon>
        <taxon>Methanocaldococcaceae</taxon>
        <taxon>Methanocaldococcus</taxon>
    </lineage>
</organism>
<proteinExistence type="inferred from homology"/>
<dbReference type="EMBL" id="L77117">
    <property type="protein sequence ID" value="AAB99166.1"/>
    <property type="molecule type" value="Genomic_DNA"/>
</dbReference>
<dbReference type="PIR" id="C64445">
    <property type="entry name" value="C64445"/>
</dbReference>
<dbReference type="SMR" id="Q58564"/>
<dbReference type="FunCoup" id="Q58564">
    <property type="interactions" value="5"/>
</dbReference>
<dbReference type="STRING" id="243232.MJ_1164"/>
<dbReference type="PaxDb" id="243232-MJ_1164"/>
<dbReference type="EnsemblBacteria" id="AAB99166">
    <property type="protein sequence ID" value="AAB99166"/>
    <property type="gene ID" value="MJ_1164"/>
</dbReference>
<dbReference type="KEGG" id="mja:MJ_1164"/>
<dbReference type="eggNOG" id="arCOG04152">
    <property type="taxonomic scope" value="Archaea"/>
</dbReference>
<dbReference type="HOGENOM" id="CLU_075726_0_0_2"/>
<dbReference type="InParanoid" id="Q58564"/>
<dbReference type="PhylomeDB" id="Q58564"/>
<dbReference type="Proteomes" id="UP000000805">
    <property type="component" value="Chromosome"/>
</dbReference>
<dbReference type="GO" id="GO:0003677">
    <property type="term" value="F:DNA binding"/>
    <property type="evidence" value="ECO:0007669"/>
    <property type="project" value="UniProtKB-KW"/>
</dbReference>
<dbReference type="GO" id="GO:0003700">
    <property type="term" value="F:DNA-binding transcription factor activity"/>
    <property type="evidence" value="ECO:0007669"/>
    <property type="project" value="UniProtKB-UniRule"/>
</dbReference>
<dbReference type="CDD" id="cd00093">
    <property type="entry name" value="HTH_XRE"/>
    <property type="match status" value="1"/>
</dbReference>
<dbReference type="Gene3D" id="1.10.260.40">
    <property type="entry name" value="lambda repressor-like DNA-binding domains"/>
    <property type="match status" value="1"/>
</dbReference>
<dbReference type="HAMAP" id="MF_00584">
    <property type="entry name" value="HTH_type_cro_C1"/>
    <property type="match status" value="1"/>
</dbReference>
<dbReference type="InterPro" id="IPR020886">
    <property type="entry name" value="Arc_TR_HTH"/>
</dbReference>
<dbReference type="InterPro" id="IPR001387">
    <property type="entry name" value="Cro/C1-type_HTH"/>
</dbReference>
<dbReference type="InterPro" id="IPR010982">
    <property type="entry name" value="Lambda_DNA-bd_dom_sf"/>
</dbReference>
<dbReference type="NCBIfam" id="NF003162">
    <property type="entry name" value="PRK04140.1"/>
    <property type="match status" value="1"/>
</dbReference>
<dbReference type="Pfam" id="PF01381">
    <property type="entry name" value="HTH_3"/>
    <property type="match status" value="1"/>
</dbReference>
<dbReference type="SMART" id="SM00530">
    <property type="entry name" value="HTH_XRE"/>
    <property type="match status" value="1"/>
</dbReference>
<dbReference type="SUPFAM" id="SSF47413">
    <property type="entry name" value="lambda repressor-like DNA-binding domains"/>
    <property type="match status" value="1"/>
</dbReference>
<dbReference type="PROSITE" id="PS50943">
    <property type="entry name" value="HTH_CROC1"/>
    <property type="match status" value="1"/>
</dbReference>